<protein>
    <recommendedName>
        <fullName evidence="1">tRNA pseudouridine synthase B</fullName>
        <ecNumber evidence="1">5.4.99.25</ecNumber>
    </recommendedName>
    <alternativeName>
        <fullName evidence="1">tRNA pseudouridine(55) synthase</fullName>
        <shortName evidence="1">Psi55 synthase</shortName>
    </alternativeName>
    <alternativeName>
        <fullName evidence="1">tRNA pseudouridylate synthase</fullName>
    </alternativeName>
    <alternativeName>
        <fullName evidence="1">tRNA-uridine isomerase</fullName>
    </alternativeName>
</protein>
<accession>C3PH13</accession>
<evidence type="ECO:0000255" key="1">
    <source>
        <dbReference type="HAMAP-Rule" id="MF_01080"/>
    </source>
</evidence>
<proteinExistence type="inferred from homology"/>
<name>TRUB_CORA7</name>
<keyword id="KW-0413">Isomerase</keyword>
<keyword id="KW-1185">Reference proteome</keyword>
<keyword id="KW-0819">tRNA processing</keyword>
<gene>
    <name evidence="1" type="primary">truB</name>
    <name type="ordered locus">cauri_1524</name>
</gene>
<dbReference type="EC" id="5.4.99.25" evidence="1"/>
<dbReference type="EMBL" id="CP001601">
    <property type="protein sequence ID" value="ACP33117.1"/>
    <property type="molecule type" value="Genomic_DNA"/>
</dbReference>
<dbReference type="RefSeq" id="WP_010190323.1">
    <property type="nucleotide sequence ID" value="NC_012590.1"/>
</dbReference>
<dbReference type="SMR" id="C3PH13"/>
<dbReference type="STRING" id="548476.cauri_1524"/>
<dbReference type="GeneID" id="31924154"/>
<dbReference type="KEGG" id="car:cauri_1524"/>
<dbReference type="eggNOG" id="COG0130">
    <property type="taxonomic scope" value="Bacteria"/>
</dbReference>
<dbReference type="HOGENOM" id="CLU_032087_0_0_11"/>
<dbReference type="OrthoDB" id="9802309at2"/>
<dbReference type="Proteomes" id="UP000002077">
    <property type="component" value="Chromosome"/>
</dbReference>
<dbReference type="GO" id="GO:0003723">
    <property type="term" value="F:RNA binding"/>
    <property type="evidence" value="ECO:0007669"/>
    <property type="project" value="InterPro"/>
</dbReference>
<dbReference type="GO" id="GO:0160148">
    <property type="term" value="F:tRNA pseudouridine(55) synthase activity"/>
    <property type="evidence" value="ECO:0007669"/>
    <property type="project" value="UniProtKB-EC"/>
</dbReference>
<dbReference type="GO" id="GO:1990481">
    <property type="term" value="P:mRNA pseudouridine synthesis"/>
    <property type="evidence" value="ECO:0007669"/>
    <property type="project" value="TreeGrafter"/>
</dbReference>
<dbReference type="GO" id="GO:0031119">
    <property type="term" value="P:tRNA pseudouridine synthesis"/>
    <property type="evidence" value="ECO:0007669"/>
    <property type="project" value="UniProtKB-UniRule"/>
</dbReference>
<dbReference type="CDD" id="cd02573">
    <property type="entry name" value="PseudoU_synth_EcTruB"/>
    <property type="match status" value="1"/>
</dbReference>
<dbReference type="FunFam" id="3.30.2350.10:FF:000011">
    <property type="entry name" value="tRNA pseudouridine synthase B"/>
    <property type="match status" value="1"/>
</dbReference>
<dbReference type="Gene3D" id="3.30.2350.10">
    <property type="entry name" value="Pseudouridine synthase"/>
    <property type="match status" value="1"/>
</dbReference>
<dbReference type="Gene3D" id="2.30.130.10">
    <property type="entry name" value="PUA domain"/>
    <property type="match status" value="1"/>
</dbReference>
<dbReference type="HAMAP" id="MF_01080">
    <property type="entry name" value="TruB_bact"/>
    <property type="match status" value="1"/>
</dbReference>
<dbReference type="InterPro" id="IPR020103">
    <property type="entry name" value="PsdUridine_synth_cat_dom_sf"/>
</dbReference>
<dbReference type="InterPro" id="IPR002501">
    <property type="entry name" value="PsdUridine_synth_N"/>
</dbReference>
<dbReference type="InterPro" id="IPR015947">
    <property type="entry name" value="PUA-like_sf"/>
</dbReference>
<dbReference type="InterPro" id="IPR036974">
    <property type="entry name" value="PUA_sf"/>
</dbReference>
<dbReference type="InterPro" id="IPR015225">
    <property type="entry name" value="tRNA_psdUridine_synth_fam2_C"/>
</dbReference>
<dbReference type="InterPro" id="IPR014780">
    <property type="entry name" value="tRNA_psdUridine_synth_TruB"/>
</dbReference>
<dbReference type="InterPro" id="IPR032819">
    <property type="entry name" value="TruB_C"/>
</dbReference>
<dbReference type="NCBIfam" id="TIGR00431">
    <property type="entry name" value="TruB"/>
    <property type="match status" value="1"/>
</dbReference>
<dbReference type="PANTHER" id="PTHR13767:SF2">
    <property type="entry name" value="PSEUDOURIDYLATE SYNTHASE TRUB1"/>
    <property type="match status" value="1"/>
</dbReference>
<dbReference type="PANTHER" id="PTHR13767">
    <property type="entry name" value="TRNA-PSEUDOURIDINE SYNTHASE"/>
    <property type="match status" value="1"/>
</dbReference>
<dbReference type="Pfam" id="PF09142">
    <property type="entry name" value="TruB_C"/>
    <property type="match status" value="1"/>
</dbReference>
<dbReference type="Pfam" id="PF16198">
    <property type="entry name" value="TruB_C_2"/>
    <property type="match status" value="1"/>
</dbReference>
<dbReference type="Pfam" id="PF01509">
    <property type="entry name" value="TruB_N"/>
    <property type="match status" value="1"/>
</dbReference>
<dbReference type="SUPFAM" id="SSF55120">
    <property type="entry name" value="Pseudouridine synthase"/>
    <property type="match status" value="1"/>
</dbReference>
<dbReference type="SUPFAM" id="SSF88697">
    <property type="entry name" value="PUA domain-like"/>
    <property type="match status" value="1"/>
</dbReference>
<reference key="1">
    <citation type="journal article" date="2010" name="BMC Genomics">
        <title>Complete genome sequence and lifestyle of black-pigmented Corynebacterium aurimucosum ATCC 700975 (formerly C. nigricans CN-1) isolated from a vaginal swab of a woman with spontaneous abortion.</title>
        <authorList>
            <person name="Trost E."/>
            <person name="Gotker S."/>
            <person name="Schneider J."/>
            <person name="Schneiker-Bekel S."/>
            <person name="Szczepanowski R."/>
            <person name="Tilker A."/>
            <person name="Viehoever P."/>
            <person name="Arnold W."/>
            <person name="Bekel T."/>
            <person name="Blom J."/>
            <person name="Gartemann K.H."/>
            <person name="Linke B."/>
            <person name="Goesmann A."/>
            <person name="Puhler A."/>
            <person name="Shukla S.K."/>
            <person name="Tauch A."/>
        </authorList>
    </citation>
    <scope>NUCLEOTIDE SEQUENCE [LARGE SCALE GENOMIC DNA]</scope>
    <source>
        <strain>ATCC 700975 / DSM 44827 / CIP 107346 / CN-1</strain>
    </source>
</reference>
<organism>
    <name type="scientific">Corynebacterium aurimucosum (strain ATCC 700975 / DSM 44827 / CIP 107346 / CN-1)</name>
    <name type="common">Corynebacterium nigricans</name>
    <dbReference type="NCBI Taxonomy" id="548476"/>
    <lineage>
        <taxon>Bacteria</taxon>
        <taxon>Bacillati</taxon>
        <taxon>Actinomycetota</taxon>
        <taxon>Actinomycetes</taxon>
        <taxon>Mycobacteriales</taxon>
        <taxon>Corynebacteriaceae</taxon>
        <taxon>Corynebacterium</taxon>
    </lineage>
</organism>
<feature type="chain" id="PRO_1000149822" description="tRNA pseudouridine synthase B">
    <location>
        <begin position="1"/>
        <end position="297"/>
    </location>
</feature>
<feature type="active site" description="Nucleophile" evidence="1">
    <location>
        <position position="44"/>
    </location>
</feature>
<comment type="function">
    <text evidence="1">Responsible for synthesis of pseudouridine from uracil-55 in the psi GC loop of transfer RNAs.</text>
</comment>
<comment type="catalytic activity">
    <reaction evidence="1">
        <text>uridine(55) in tRNA = pseudouridine(55) in tRNA</text>
        <dbReference type="Rhea" id="RHEA:42532"/>
        <dbReference type="Rhea" id="RHEA-COMP:10101"/>
        <dbReference type="Rhea" id="RHEA-COMP:10102"/>
        <dbReference type="ChEBI" id="CHEBI:65314"/>
        <dbReference type="ChEBI" id="CHEBI:65315"/>
        <dbReference type="EC" id="5.4.99.25"/>
    </reaction>
</comment>
<comment type="similarity">
    <text evidence="1">Belongs to the pseudouridine synthase TruB family. Type 1 subfamily.</text>
</comment>
<sequence length="297" mass="31844">MTDPLERSGLVVVDKPAGMTSHDVVGKLRRFFRTRKVGHAGTLDPMATGVLVVGIERGTKFLAHMVASTKAYDATIRLGTATHTDDAEGEATWGEPATAVEDSAIAREIAALTGDIMQRPAAVSAIKVDGKRAHERVRAGEEVELPARPVTVSRFDILATRREGEFIDLDVSVACSSGTYIRSLARDLGEALGVGGHLTALRRTEVGPFRLDDAHPLDALEDSPELSLSLDEALARSYPVLEVTDEEAQALAMGKWLEPRGLKGTYAAVDPQGRSIALIQEKGKRLATVFVARPSTL</sequence>